<dbReference type="EMBL" id="Z48225">
    <property type="protein sequence ID" value="CAA88256.1"/>
    <property type="molecule type" value="mRNA"/>
</dbReference>
<dbReference type="PIR" id="S71961">
    <property type="entry name" value="S71961"/>
</dbReference>
<dbReference type="RefSeq" id="NP_446402.1">
    <property type="nucleotide sequence ID" value="NM_053950.1"/>
</dbReference>
<dbReference type="SMR" id="Q63186"/>
<dbReference type="FunCoup" id="Q63186">
    <property type="interactions" value="3624"/>
</dbReference>
<dbReference type="IntAct" id="Q63186">
    <property type="interactions" value="8"/>
</dbReference>
<dbReference type="STRING" id="10116.ENSRNOP00000007763"/>
<dbReference type="GlyGen" id="Q63186">
    <property type="glycosylation" value="1 site"/>
</dbReference>
<dbReference type="iPTMnet" id="Q63186"/>
<dbReference type="PhosphoSitePlus" id="Q63186"/>
<dbReference type="jPOST" id="Q63186"/>
<dbReference type="PaxDb" id="10116-ENSRNOP00000007763"/>
<dbReference type="Ensembl" id="ENSRNOT00000007763.6">
    <property type="protein sequence ID" value="ENSRNOP00000007763.5"/>
    <property type="gene ID" value="ENSRNOG00000005301.7"/>
</dbReference>
<dbReference type="GeneID" id="117019"/>
<dbReference type="KEGG" id="rno:117019"/>
<dbReference type="AGR" id="RGD:620208"/>
<dbReference type="CTD" id="8890"/>
<dbReference type="RGD" id="620208">
    <property type="gene designation" value="Eif2b4"/>
</dbReference>
<dbReference type="eggNOG" id="KOG1467">
    <property type="taxonomic scope" value="Eukaryota"/>
</dbReference>
<dbReference type="GeneTree" id="ENSGT00550000075009"/>
<dbReference type="InParanoid" id="Q63186"/>
<dbReference type="Reactome" id="R-RNO-72731">
    <property type="pathway name" value="Recycling of eIF2:GDP"/>
</dbReference>
<dbReference type="PRO" id="PR:Q63186"/>
<dbReference type="Proteomes" id="UP000002494">
    <property type="component" value="Chromosome 6"/>
</dbReference>
<dbReference type="GO" id="GO:0005737">
    <property type="term" value="C:cytoplasm"/>
    <property type="evidence" value="ECO:0000250"/>
    <property type="project" value="UniProtKB"/>
</dbReference>
<dbReference type="GO" id="GO:0005829">
    <property type="term" value="C:cytosol"/>
    <property type="evidence" value="ECO:0007669"/>
    <property type="project" value="UniProtKB-SubCell"/>
</dbReference>
<dbReference type="GO" id="GO:0005851">
    <property type="term" value="C:eukaryotic translation initiation factor 2B complex"/>
    <property type="evidence" value="ECO:0000314"/>
    <property type="project" value="RGD"/>
</dbReference>
<dbReference type="GO" id="GO:0005085">
    <property type="term" value="F:guanyl-nucleotide exchange factor activity"/>
    <property type="evidence" value="ECO:0000314"/>
    <property type="project" value="RGD"/>
</dbReference>
<dbReference type="GO" id="GO:0003743">
    <property type="term" value="F:translation initiation factor activity"/>
    <property type="evidence" value="ECO:0000303"/>
    <property type="project" value="UniProtKB"/>
</dbReference>
<dbReference type="GO" id="GO:0031369">
    <property type="term" value="F:translation initiation factor binding"/>
    <property type="evidence" value="ECO:0000314"/>
    <property type="project" value="RGD"/>
</dbReference>
<dbReference type="GO" id="GO:0002183">
    <property type="term" value="P:cytoplasmic translational initiation"/>
    <property type="evidence" value="ECO:0000250"/>
    <property type="project" value="UniProtKB"/>
</dbReference>
<dbReference type="GO" id="GO:0021766">
    <property type="term" value="P:hippocampus development"/>
    <property type="evidence" value="ECO:0000270"/>
    <property type="project" value="RGD"/>
</dbReference>
<dbReference type="GO" id="GO:0042552">
    <property type="term" value="P:myelination"/>
    <property type="evidence" value="ECO:0000250"/>
    <property type="project" value="UniProtKB"/>
</dbReference>
<dbReference type="GO" id="GO:0014003">
    <property type="term" value="P:oligodendrocyte development"/>
    <property type="evidence" value="ECO:0000250"/>
    <property type="project" value="UniProtKB"/>
</dbReference>
<dbReference type="GO" id="GO:0001541">
    <property type="term" value="P:ovarian follicle development"/>
    <property type="evidence" value="ECO:0000250"/>
    <property type="project" value="UniProtKB"/>
</dbReference>
<dbReference type="GO" id="GO:0009749">
    <property type="term" value="P:response to glucose"/>
    <property type="evidence" value="ECO:0000314"/>
    <property type="project" value="UniProtKB"/>
</dbReference>
<dbReference type="GO" id="GO:0009408">
    <property type="term" value="P:response to heat"/>
    <property type="evidence" value="ECO:0000314"/>
    <property type="project" value="UniProtKB"/>
</dbReference>
<dbReference type="GO" id="GO:0043434">
    <property type="term" value="P:response to peptide hormone"/>
    <property type="evidence" value="ECO:0000314"/>
    <property type="project" value="UniProtKB"/>
</dbReference>
<dbReference type="GO" id="GO:0050852">
    <property type="term" value="P:T cell receptor signaling pathway"/>
    <property type="evidence" value="ECO:0000250"/>
    <property type="project" value="UniProtKB"/>
</dbReference>
<dbReference type="GO" id="GO:0006413">
    <property type="term" value="P:translational initiation"/>
    <property type="evidence" value="ECO:0000250"/>
    <property type="project" value="UniProtKB"/>
</dbReference>
<dbReference type="FunFam" id="3.40.50.10470:FF:000002">
    <property type="entry name" value="Probable translation initiation factor eIF-2B subunit delta"/>
    <property type="match status" value="1"/>
</dbReference>
<dbReference type="Gene3D" id="3.40.50.10470">
    <property type="entry name" value="Translation initiation factor eif-2b, domain 2"/>
    <property type="match status" value="1"/>
</dbReference>
<dbReference type="InterPro" id="IPR000649">
    <property type="entry name" value="IF-2B-related"/>
</dbReference>
<dbReference type="InterPro" id="IPR042529">
    <property type="entry name" value="IF_2B-like_C"/>
</dbReference>
<dbReference type="InterPro" id="IPR037171">
    <property type="entry name" value="NagB/RpiA_transferase-like"/>
</dbReference>
<dbReference type="PANTHER" id="PTHR10233">
    <property type="entry name" value="TRANSLATION INITIATION FACTOR EIF-2B"/>
    <property type="match status" value="1"/>
</dbReference>
<dbReference type="PANTHER" id="PTHR10233:SF14">
    <property type="entry name" value="TRANSLATION INITIATION FACTOR EIF-2B SUBUNIT DELTA"/>
    <property type="match status" value="1"/>
</dbReference>
<dbReference type="Pfam" id="PF01008">
    <property type="entry name" value="IF-2B"/>
    <property type="match status" value="1"/>
</dbReference>
<dbReference type="SUPFAM" id="SSF100950">
    <property type="entry name" value="NagB/RpiA/CoA transferase-like"/>
    <property type="match status" value="1"/>
</dbReference>
<accession>Q63186</accession>
<comment type="function">
    <text evidence="2">Acts as a component of the translation initiation factor 2B (eIF2B) complex, which catalyzes the exchange of GDP for GTP on eukaryotic initiation factor 2 (eIF2) gamma subunit. Its guanine nucleotide exchange factor activity is repressed when bound to eIF2 complex phosphorylated on the alpha subunit, thereby limiting the amount of methionyl-initiator methionine tRNA available to the ribosome and consequently global translation is repressed.</text>
</comment>
<comment type="activity regulation">
    <text evidence="2">Activated by the chemical integrated stress response (ISR) inhibitor ISRIB which stimulates guanine nucleotide exchange factor activity for both phosphorylated and unphosphorylated eIF2.</text>
</comment>
<comment type="subunit">
    <text evidence="2">Component of the translation initiation factor 2B (eIF2B) complex which is a heterodecamer of two sets of five different subunits: alpha, beta, gamma, delta and epsilon. Subunits alpha, beta and delta comprise a regulatory subcomplex and subunits epsilon and gamma comprise a catalytic subcomplex. Within the complex, the hexameric regulatory complex resides at the center, with the two heterodimeric catalytic subcomplexes bound on opposite sides.</text>
</comment>
<comment type="subcellular location">
    <subcellularLocation>
        <location evidence="1">Cytoplasm</location>
        <location evidence="1">Cytosol</location>
    </subcellularLocation>
</comment>
<comment type="similarity">
    <text evidence="4">Belongs to the eIF-2B alpha/beta/delta subunits family.</text>
</comment>
<protein>
    <recommendedName>
        <fullName>Translation initiation factor eIF2B subunit delta</fullName>
    </recommendedName>
    <alternativeName>
        <fullName>eIF2B GDP-GTP exchange factor subunit delta</fullName>
    </alternativeName>
</protein>
<organism>
    <name type="scientific">Rattus norvegicus</name>
    <name type="common">Rat</name>
    <dbReference type="NCBI Taxonomy" id="10116"/>
    <lineage>
        <taxon>Eukaryota</taxon>
        <taxon>Metazoa</taxon>
        <taxon>Chordata</taxon>
        <taxon>Craniata</taxon>
        <taxon>Vertebrata</taxon>
        <taxon>Euteleostomi</taxon>
        <taxon>Mammalia</taxon>
        <taxon>Eutheria</taxon>
        <taxon>Euarchontoglires</taxon>
        <taxon>Glires</taxon>
        <taxon>Rodentia</taxon>
        <taxon>Myomorpha</taxon>
        <taxon>Muroidea</taxon>
        <taxon>Muridae</taxon>
        <taxon>Murinae</taxon>
        <taxon>Rattus</taxon>
    </lineage>
</organism>
<proteinExistence type="evidence at transcript level"/>
<gene>
    <name type="primary">Eif2b4</name>
    <name type="synonym">Eif2bd</name>
</gene>
<name>EI2BD_RAT</name>
<evidence type="ECO:0000250" key="1">
    <source>
        <dbReference type="UniProtKB" id="Q09924"/>
    </source>
</evidence>
<evidence type="ECO:0000250" key="2">
    <source>
        <dbReference type="UniProtKB" id="Q9UI10"/>
    </source>
</evidence>
<evidence type="ECO:0000256" key="3">
    <source>
        <dbReference type="SAM" id="MobiDB-lite"/>
    </source>
</evidence>
<evidence type="ECO:0000305" key="4"/>
<reference key="1">
    <citation type="journal article" date="1996" name="Biochem. J.">
        <title>eIF2B, the guanine nucleotide-exchange factor for eukaryotic initiation factor 2. Sequence conservation between the alpha, beta and delta subunits of eIF2B from mammals and yeast.</title>
        <authorList>
            <person name="Price N.T."/>
            <person name="Mellor H."/>
            <person name="Craddock B.L."/>
            <person name="Flowers K.M."/>
            <person name="Kimball S.R."/>
            <person name="Wilmer T."/>
            <person name="Jefferson L.S."/>
            <person name="Proud C.G."/>
        </authorList>
    </citation>
    <scope>NUCLEOTIDE SEQUENCE [MRNA]</scope>
    <source>
        <strain>Sprague-Dawley</strain>
        <tissue>Brain</tissue>
    </source>
</reference>
<feature type="initiator methionine" description="Removed" evidence="2">
    <location>
        <position position="1"/>
    </location>
</feature>
<feature type="chain" id="PRO_0000156070" description="Translation initiation factor eIF2B subunit delta">
    <location>
        <begin position="2"/>
        <end position="524"/>
    </location>
</feature>
<feature type="region of interest" description="Disordered" evidence="3">
    <location>
        <begin position="1"/>
        <end position="174"/>
    </location>
</feature>
<feature type="region of interest" description="May bind the chemical integrated stress response (ISR) inhibitor ISRIB" evidence="2">
    <location>
        <begin position="171"/>
        <end position="180"/>
    </location>
</feature>
<feature type="compositionally biased region" description="Basic and acidic residues" evidence="3">
    <location>
        <begin position="8"/>
        <end position="20"/>
    </location>
</feature>
<feature type="compositionally biased region" description="Basic and acidic residues" evidence="3">
    <location>
        <begin position="31"/>
        <end position="40"/>
    </location>
</feature>
<feature type="compositionally biased region" description="Basic residues" evidence="3">
    <location>
        <begin position="41"/>
        <end position="51"/>
    </location>
</feature>
<feature type="compositionally biased region" description="Basic and acidic residues" evidence="3">
    <location>
        <begin position="96"/>
        <end position="121"/>
    </location>
</feature>
<feature type="compositionally biased region" description="Basic and acidic residues" evidence="3">
    <location>
        <begin position="161"/>
        <end position="174"/>
    </location>
</feature>
<feature type="modified residue" description="N-acetylalanine" evidence="2">
    <location>
        <position position="2"/>
    </location>
</feature>
<feature type="modified residue" description="Phosphoserine" evidence="2">
    <location>
        <position position="12"/>
    </location>
</feature>
<feature type="modified residue" description="Phosphothreonine" evidence="2">
    <location>
        <position position="86"/>
    </location>
</feature>
<keyword id="KW-0007">Acetylation</keyword>
<keyword id="KW-0963">Cytoplasm</keyword>
<keyword id="KW-0396">Initiation factor</keyword>
<keyword id="KW-0597">Phosphoprotein</keyword>
<keyword id="KW-0648">Protein biosynthesis</keyword>
<keyword id="KW-1185">Reference proteome</keyword>
<sequence length="524" mass="57809">MAAVAVAVREESRSEMKTELSPRPGAAGRELTQEEKLQLRKEKKQQKKKRKEEKGADQEIGSAVSAAQRQDPVRELQGTGSQLGGTTGEKLPAGRSKAELRAERRAKQEAERALKQARKGEQGGPSPQACPSTAGEATSGVKRVPEHTQADDPTLLRRLLRKPDRQQVPTRKDYGSKVSLFSHLPQYSRQSSLTQYMSIPSSVIHPAMVRLGLQYSQGLVSGSNARCIALLHALQQVIQDYTTPPNEELSRDLVNKLKPYISFLTQCRPMSASMCNAIKFFNKEVTGMSSSKREEEAKSELKEAIDRYVQEKIVLASQAISRFASKKISDGDVILVYGCSSLVSRILQEAWVEGRRFRVVVVDSRPRLEGRHMLHCLVRAGVPTSYLLIPAASYVLPEVSKVLLGAHALLANGSVMSRVGTAQLALVARAHNVPVLVCCETYKFCERVQTDAFVSNELDDPDDLQCKRGDQVTLANWQNNSSLRLLNLVYDVTPPELVDLVITELGMIPCSSVPVVLRVKSSDQ</sequence>